<organism>
    <name type="scientific">Sarcophaga peregrina</name>
    <name type="common">Flesh fly</name>
    <name type="synonym">Boettcherisca peregrina</name>
    <dbReference type="NCBI Taxonomy" id="7386"/>
    <lineage>
        <taxon>Eukaryota</taxon>
        <taxon>Metazoa</taxon>
        <taxon>Ecdysozoa</taxon>
        <taxon>Arthropoda</taxon>
        <taxon>Hexapoda</taxon>
        <taxon>Insecta</taxon>
        <taxon>Pterygota</taxon>
        <taxon>Neoptera</taxon>
        <taxon>Endopterygota</taxon>
        <taxon>Diptera</taxon>
        <taxon>Brachycera</taxon>
        <taxon>Muscomorpha</taxon>
        <taxon>Oestroidea</taxon>
        <taxon>Sarcophagidae</taxon>
        <taxon>Sarcophaga</taxon>
        <taxon>Boettcherisca</taxon>
    </lineage>
</organism>
<sequence length="94" mass="9915">MKSFIVLAVTLCLAAFFMGQSVASPAAAAEESKFVDGLHALKTIEPELHGRYKRATCDLLSGTGINHSACAAHCLLRGNRGGYCNGKAVCVCRN</sequence>
<feature type="signal peptide" evidence="1">
    <location>
        <begin position="1"/>
        <end position="23"/>
    </location>
</feature>
<feature type="propeptide" id="PRO_0000006756" evidence="4">
    <location>
        <begin position="24"/>
        <end position="54"/>
    </location>
</feature>
<feature type="peptide" id="PRO_0000006757" description="Sapecin">
    <location>
        <begin position="55"/>
        <end position="94"/>
    </location>
</feature>
<feature type="disulfide bond" evidence="2 3">
    <location>
        <begin position="57"/>
        <end position="84"/>
    </location>
</feature>
<feature type="disulfide bond" evidence="2 3">
    <location>
        <begin position="70"/>
        <end position="90"/>
    </location>
</feature>
<feature type="disulfide bond" evidence="2 3">
    <location>
        <begin position="74"/>
        <end position="92"/>
    </location>
</feature>
<feature type="strand" evidence="5">
    <location>
        <begin position="57"/>
        <end position="60"/>
    </location>
</feature>
<feature type="helix" evidence="5">
    <location>
        <begin position="68"/>
        <end position="78"/>
    </location>
</feature>
<feature type="strand" evidence="5">
    <location>
        <begin position="80"/>
        <end position="85"/>
    </location>
</feature>
<feature type="turn" evidence="5">
    <location>
        <begin position="86"/>
        <end position="88"/>
    </location>
</feature>
<feature type="strand" evidence="5">
    <location>
        <begin position="89"/>
        <end position="93"/>
    </location>
</feature>
<accession>P18313</accession>
<name>SAPE_SARPE</name>
<keyword id="KW-0002">3D-structure</keyword>
<keyword id="KW-0044">Antibiotic</keyword>
<keyword id="KW-0929">Antimicrobial</keyword>
<keyword id="KW-0165">Cleavage on pair of basic residues</keyword>
<keyword id="KW-0211">Defensin</keyword>
<keyword id="KW-0903">Direct protein sequencing</keyword>
<keyword id="KW-1015">Disulfide bond</keyword>
<keyword id="KW-0391">Immunity</keyword>
<keyword id="KW-0399">Innate immunity</keyword>
<keyword id="KW-0964">Secreted</keyword>
<keyword id="KW-0732">Signal</keyword>
<comment type="function">
    <text>Sapecins, which are potent bactericidal proteins, are produced in response to injury. Sapecin is cytotoxic to Gram-positive bacteria, and to a lesser extent against Gram-negative bacteria.</text>
</comment>
<comment type="subcellular location">
    <subcellularLocation>
        <location>Secreted</location>
    </subcellularLocation>
</comment>
<comment type="tissue specificity">
    <text>Hemocytes and fat body.</text>
</comment>
<comment type="induction">
    <text>By injury to the larval cell wall.</text>
</comment>
<comment type="similarity">
    <text evidence="2">Belongs to the invertebrate defensin family. Type 1 subfamily.</text>
</comment>
<reference key="1">
    <citation type="journal article" date="1988" name="J. Biol. Chem.">
        <title>Molecular cloning of cDNA for sapecin and unique expression of the sapecin gene during the development of Sarcophaga peregrina.</title>
        <authorList>
            <person name="Matsuyama K."/>
            <person name="Natori S."/>
        </authorList>
    </citation>
    <scope>NUCLEOTIDE SEQUENCE [MRNA]</scope>
</reference>
<reference key="2">
    <citation type="journal article" date="1988" name="J. Biol. Chem.">
        <title>Purification of three antibacterial proteins from the culture medium of NIH-Sape-4, an embryonic cell line of Sarcophaga peregrina.</title>
        <authorList>
            <person name="Matsuyama K."/>
            <person name="Natori S."/>
        </authorList>
    </citation>
    <scope>PROTEIN SEQUENCE OF 55-94</scope>
</reference>
<reference key="3">
    <citation type="journal article" date="1990" name="J. Biochem.">
        <title>Determination of the disulfide array in sapecin, an antibacterial peptide of Sarcophaga peregrina (flesh fly).</title>
        <authorList>
            <person name="Kuzuhara T."/>
            <person name="Nakajima Y."/>
            <person name="Matsuyama K."/>
            <person name="Natori S."/>
        </authorList>
    </citation>
    <scope>DISULFIDE BONDS</scope>
</reference>
<reference key="4">
    <citation type="journal article" date="1990" name="FEBS Lett.">
        <title>1H nuclear magnetic resonance study of the solution conformation of an antibacterial protein, sapecin.</title>
        <authorList>
            <person name="Hanzawa H."/>
            <person name="Shimada I."/>
            <person name="Kuzuhara T."/>
            <person name="Komano H."/>
            <person name="Kohda D."/>
            <person name="Inagaki F."/>
            <person name="Natori S."/>
            <person name="Arata Y."/>
        </authorList>
    </citation>
    <scope>STRUCTURE BY NMR</scope>
</reference>
<proteinExistence type="evidence at protein level"/>
<dbReference type="EMBL" id="J04053">
    <property type="protein sequence ID" value="AAA29984.1"/>
    <property type="molecule type" value="mRNA"/>
</dbReference>
<dbReference type="PIR" id="A31792">
    <property type="entry name" value="A31792"/>
</dbReference>
<dbReference type="PDB" id="1L4V">
    <property type="method" value="NMR"/>
    <property type="chains" value="A=55-94"/>
</dbReference>
<dbReference type="PDBsum" id="1L4V"/>
<dbReference type="BMRB" id="P18313"/>
<dbReference type="SMR" id="P18313"/>
<dbReference type="TCDB" id="1.C.47.1.3">
    <property type="family name" value="the insect/fungal defensin (insect/fungal defensin) family"/>
</dbReference>
<dbReference type="EvolutionaryTrace" id="P18313"/>
<dbReference type="GO" id="GO:0005615">
    <property type="term" value="C:extracellular space"/>
    <property type="evidence" value="ECO:0007669"/>
    <property type="project" value="TreeGrafter"/>
</dbReference>
<dbReference type="GO" id="GO:0050830">
    <property type="term" value="P:defense response to Gram-positive bacterium"/>
    <property type="evidence" value="ECO:0007669"/>
    <property type="project" value="UniProtKB-ARBA"/>
</dbReference>
<dbReference type="GO" id="GO:0006959">
    <property type="term" value="P:humoral immune response"/>
    <property type="evidence" value="ECO:0007669"/>
    <property type="project" value="TreeGrafter"/>
</dbReference>
<dbReference type="GO" id="GO:0045087">
    <property type="term" value="P:innate immune response"/>
    <property type="evidence" value="ECO:0007669"/>
    <property type="project" value="UniProtKB-KW"/>
</dbReference>
<dbReference type="CDD" id="cd21806">
    <property type="entry name" value="DEFL_defensin-like"/>
    <property type="match status" value="1"/>
</dbReference>
<dbReference type="FunFam" id="3.30.30.10:FF:000005">
    <property type="entry name" value="Defensin"/>
    <property type="match status" value="1"/>
</dbReference>
<dbReference type="Gene3D" id="3.30.30.10">
    <property type="entry name" value="Knottin, scorpion toxin-like"/>
    <property type="match status" value="1"/>
</dbReference>
<dbReference type="InterPro" id="IPR017982">
    <property type="entry name" value="Defensin_insect"/>
</dbReference>
<dbReference type="InterPro" id="IPR001542">
    <property type="entry name" value="Defensin_invertebrate/fungal"/>
</dbReference>
<dbReference type="InterPro" id="IPR036574">
    <property type="entry name" value="Scorpion_toxin-like_sf"/>
</dbReference>
<dbReference type="PANTHER" id="PTHR13645">
    <property type="entry name" value="DEFENSIN"/>
    <property type="match status" value="1"/>
</dbReference>
<dbReference type="PANTHER" id="PTHR13645:SF0">
    <property type="entry name" value="DEFENSIN"/>
    <property type="match status" value="1"/>
</dbReference>
<dbReference type="Pfam" id="PF01097">
    <property type="entry name" value="Defensin_2"/>
    <property type="match status" value="1"/>
</dbReference>
<dbReference type="PRINTS" id="PR00271">
    <property type="entry name" value="DEFENSIN"/>
</dbReference>
<dbReference type="SUPFAM" id="SSF57095">
    <property type="entry name" value="Scorpion toxin-like"/>
    <property type="match status" value="1"/>
</dbReference>
<dbReference type="PROSITE" id="PS51378">
    <property type="entry name" value="INVERT_DEFENSINS"/>
    <property type="match status" value="1"/>
</dbReference>
<evidence type="ECO:0000255" key="1"/>
<evidence type="ECO:0000255" key="2">
    <source>
        <dbReference type="PROSITE-ProRule" id="PRU00710"/>
    </source>
</evidence>
<evidence type="ECO:0000269" key="3">
    <source>
    </source>
</evidence>
<evidence type="ECO:0000269" key="4">
    <source>
    </source>
</evidence>
<evidence type="ECO:0007829" key="5">
    <source>
        <dbReference type="PDB" id="1L4V"/>
    </source>
</evidence>
<protein>
    <recommendedName>
        <fullName>Sapecin</fullName>
    </recommendedName>
</protein>